<dbReference type="EC" id="4.1.1.112" evidence="1"/>
<dbReference type="EMBL" id="CP000749">
    <property type="protein sequence ID" value="ABR71837.1"/>
    <property type="molecule type" value="Genomic_DNA"/>
</dbReference>
<dbReference type="SMR" id="A6VZF8"/>
<dbReference type="STRING" id="400668.Mmwyl1_2926"/>
<dbReference type="KEGG" id="mmw:Mmwyl1_2926"/>
<dbReference type="eggNOG" id="COG2513">
    <property type="taxonomic scope" value="Bacteria"/>
</dbReference>
<dbReference type="HOGENOM" id="CLU_027389_3_2_6"/>
<dbReference type="OrthoDB" id="9771433at2"/>
<dbReference type="GO" id="GO:0000287">
    <property type="term" value="F:magnesium ion binding"/>
    <property type="evidence" value="ECO:0007669"/>
    <property type="project" value="UniProtKB-UniRule"/>
</dbReference>
<dbReference type="GO" id="GO:0046421">
    <property type="term" value="F:methylisocitrate lyase activity"/>
    <property type="evidence" value="ECO:0007669"/>
    <property type="project" value="TreeGrafter"/>
</dbReference>
<dbReference type="GO" id="GO:0008948">
    <property type="term" value="F:oxaloacetate decarboxylase activity"/>
    <property type="evidence" value="ECO:0007669"/>
    <property type="project" value="UniProtKB-UniRule"/>
</dbReference>
<dbReference type="GO" id="GO:0006107">
    <property type="term" value="P:oxaloacetate metabolic process"/>
    <property type="evidence" value="ECO:0007669"/>
    <property type="project" value="UniProtKB-UniRule"/>
</dbReference>
<dbReference type="GO" id="GO:0019629">
    <property type="term" value="P:propionate catabolic process, 2-methylcitrate cycle"/>
    <property type="evidence" value="ECO:0007669"/>
    <property type="project" value="TreeGrafter"/>
</dbReference>
<dbReference type="GO" id="GO:0042866">
    <property type="term" value="P:pyruvate biosynthetic process"/>
    <property type="evidence" value="ECO:0007669"/>
    <property type="project" value="UniProtKB-UniRule"/>
</dbReference>
<dbReference type="CDD" id="cd00377">
    <property type="entry name" value="ICL_PEPM"/>
    <property type="match status" value="1"/>
</dbReference>
<dbReference type="Gene3D" id="3.20.20.60">
    <property type="entry name" value="Phosphoenolpyruvate-binding domains"/>
    <property type="match status" value="1"/>
</dbReference>
<dbReference type="HAMAP" id="MF_01299">
    <property type="entry name" value="OadC"/>
    <property type="match status" value="1"/>
</dbReference>
<dbReference type="InterPro" id="IPR039556">
    <property type="entry name" value="ICL/PEPM"/>
</dbReference>
<dbReference type="InterPro" id="IPR023687">
    <property type="entry name" value="Oxaloacetate_deCOase_bac"/>
</dbReference>
<dbReference type="InterPro" id="IPR015813">
    <property type="entry name" value="Pyrv/PenolPyrv_kinase-like_dom"/>
</dbReference>
<dbReference type="InterPro" id="IPR040442">
    <property type="entry name" value="Pyrv_kinase-like_dom_sf"/>
</dbReference>
<dbReference type="PANTHER" id="PTHR42905:SF3">
    <property type="entry name" value="OXALOACETATE DECARBOXYLASE"/>
    <property type="match status" value="1"/>
</dbReference>
<dbReference type="PANTHER" id="PTHR42905">
    <property type="entry name" value="PHOSPHOENOLPYRUVATE CARBOXYLASE"/>
    <property type="match status" value="1"/>
</dbReference>
<dbReference type="Pfam" id="PF13714">
    <property type="entry name" value="PEP_mutase"/>
    <property type="match status" value="1"/>
</dbReference>
<dbReference type="SUPFAM" id="SSF51621">
    <property type="entry name" value="Phosphoenolpyruvate/pyruvate domain"/>
    <property type="match status" value="1"/>
</dbReference>
<name>OADC_MARMS</name>
<reference key="1">
    <citation type="submission" date="2007-06" db="EMBL/GenBank/DDBJ databases">
        <title>Complete sequence of Marinomonas sp. MWYL1.</title>
        <authorList>
            <consortium name="US DOE Joint Genome Institute"/>
            <person name="Copeland A."/>
            <person name="Lucas S."/>
            <person name="Lapidus A."/>
            <person name="Barry K."/>
            <person name="Glavina del Rio T."/>
            <person name="Dalin E."/>
            <person name="Tice H."/>
            <person name="Pitluck S."/>
            <person name="Kiss H."/>
            <person name="Brettin T."/>
            <person name="Bruce D."/>
            <person name="Detter J.C."/>
            <person name="Han C."/>
            <person name="Schmutz J."/>
            <person name="Larimer F."/>
            <person name="Land M."/>
            <person name="Hauser L."/>
            <person name="Kyrpides N."/>
            <person name="Kim E."/>
            <person name="Johnston A.W.B."/>
            <person name="Todd J.D."/>
            <person name="Rogers R."/>
            <person name="Wexler M."/>
            <person name="Bond P.L."/>
            <person name="Li Y."/>
            <person name="Richardson P."/>
        </authorList>
    </citation>
    <scope>NUCLEOTIDE SEQUENCE [LARGE SCALE GENOMIC DNA]</scope>
    <source>
        <strain>MWYL1</strain>
    </source>
</reference>
<proteinExistence type="inferred from homology"/>
<protein>
    <recommendedName>
        <fullName evidence="1">Oxaloacetate decarboxylase</fullName>
        <ecNumber evidence="1">4.1.1.112</ecNumber>
    </recommendedName>
</protein>
<organism>
    <name type="scientific">Marinomonas sp. (strain MWYL1)</name>
    <dbReference type="NCBI Taxonomy" id="400668"/>
    <lineage>
        <taxon>Bacteria</taxon>
        <taxon>Pseudomonadati</taxon>
        <taxon>Pseudomonadota</taxon>
        <taxon>Gammaproteobacteria</taxon>
        <taxon>Oceanospirillales</taxon>
        <taxon>Oceanospirillaceae</taxon>
        <taxon>Marinomonas</taxon>
    </lineage>
</organism>
<accession>A6VZF8</accession>
<feature type="chain" id="PRO_0000364057" description="Oxaloacetate decarboxylase">
    <location>
        <begin position="1"/>
        <end position="287"/>
    </location>
</feature>
<feature type="binding site" evidence="1">
    <location>
        <position position="50"/>
    </location>
    <ligand>
        <name>substrate</name>
    </ligand>
</feature>
<feature type="binding site" evidence="1">
    <location>
        <position position="88"/>
    </location>
    <ligand>
        <name>Mg(2+)</name>
        <dbReference type="ChEBI" id="CHEBI:18420"/>
    </ligand>
</feature>
<feature type="binding site" evidence="1">
    <location>
        <position position="159"/>
    </location>
    <ligand>
        <name>substrate</name>
    </ligand>
</feature>
<feature type="binding site" evidence="1">
    <location>
        <position position="235"/>
    </location>
    <ligand>
        <name>substrate</name>
    </ligand>
</feature>
<gene>
    <name type="ordered locus">Mmwyl1_2926</name>
</gene>
<evidence type="ECO:0000255" key="1">
    <source>
        <dbReference type="HAMAP-Rule" id="MF_01299"/>
    </source>
</evidence>
<evidence type="ECO:0000305" key="2"/>
<sequence length="287" mass="31241">MATPSQHDLRNDFRALLASGKCYYTASTFDPMSARIAADLGFEVGILGGSVASLQVLAAPDFALITLSEFTEQATRIGRVARLPIIADADHGYGNALNVMRTIVELERAGVAALTIEDTLLPAKYGHKSTDLIPVEEAVGKLKAALEARIDPIMSIIARTNAGQLSTEETISRVKAYQAVGVDGICMVGIRDFAHLEEISQHISIPIMLVAYDNPELRDRERLAANGVRIVVNGHAAYFAAIKATYDCLREQRGIAEGTLDASELSTRYSTLEENRVWANKYMDVQE</sequence>
<comment type="function">
    <text evidence="1">Catalyzes the decarboxylation of oxaloacetate into pyruvate. Seems to play a role in maintaining cellular concentrations of bicarbonate and pyruvate.</text>
</comment>
<comment type="catalytic activity">
    <reaction evidence="1">
        <text>oxaloacetate + H(+) = pyruvate + CO2</text>
        <dbReference type="Rhea" id="RHEA:15641"/>
        <dbReference type="ChEBI" id="CHEBI:15361"/>
        <dbReference type="ChEBI" id="CHEBI:15378"/>
        <dbReference type="ChEBI" id="CHEBI:16452"/>
        <dbReference type="ChEBI" id="CHEBI:16526"/>
        <dbReference type="EC" id="4.1.1.112"/>
    </reaction>
</comment>
<comment type="cofactor">
    <cofactor evidence="1">
        <name>Mg(2+)</name>
        <dbReference type="ChEBI" id="CHEBI:18420"/>
    </cofactor>
    <text evidence="1">Binds 1 Mg(2+) ion per subunit.</text>
</comment>
<comment type="subunit">
    <text evidence="1">Homotetramer; dimer of dimers.</text>
</comment>
<comment type="similarity">
    <text evidence="2">Belongs to the isocitrate lyase/PEP mutase superfamily. Oxaloacetate decarboxylase family.</text>
</comment>
<keyword id="KW-0210">Decarboxylase</keyword>
<keyword id="KW-0456">Lyase</keyword>
<keyword id="KW-0460">Magnesium</keyword>
<keyword id="KW-0479">Metal-binding</keyword>